<organism>
    <name type="scientific">Phaseolus vulgaris</name>
    <name type="common">Kidney bean</name>
    <name type="synonym">French bean</name>
    <dbReference type="NCBI Taxonomy" id="3885"/>
    <lineage>
        <taxon>Eukaryota</taxon>
        <taxon>Viridiplantae</taxon>
        <taxon>Streptophyta</taxon>
        <taxon>Embryophyta</taxon>
        <taxon>Tracheophyta</taxon>
        <taxon>Spermatophyta</taxon>
        <taxon>Magnoliopsida</taxon>
        <taxon>eudicotyledons</taxon>
        <taxon>Gunneridae</taxon>
        <taxon>Pentapetalae</taxon>
        <taxon>rosids</taxon>
        <taxon>fabids</taxon>
        <taxon>Fabales</taxon>
        <taxon>Fabaceae</taxon>
        <taxon>Papilionoideae</taxon>
        <taxon>50 kb inversion clade</taxon>
        <taxon>NPAAA clade</taxon>
        <taxon>indigoferoid/millettioid clade</taxon>
        <taxon>Phaseoleae</taxon>
        <taxon>Phaseolus</taxon>
    </lineage>
</organism>
<name>PHAL_PHAVU</name>
<protein>
    <recommendedName>
        <fullName>Leucoagglutinating phytohemagglutinin</fullName>
        <shortName>PHA-L</shortName>
    </recommendedName>
</protein>
<keyword id="KW-0002">3D-structure</keyword>
<keyword id="KW-0325">Glycoprotein</keyword>
<keyword id="KW-0430">Lectin</keyword>
<keyword id="KW-0465">Mannose-binding</keyword>
<keyword id="KW-0611">Plant defense</keyword>
<keyword id="KW-0732">Signal</keyword>
<keyword id="KW-0800">Toxin</keyword>
<dbReference type="EMBL" id="X02409">
    <property type="protein sequence ID" value="CAA26257.1"/>
    <property type="molecule type" value="Genomic_DNA"/>
</dbReference>
<dbReference type="EMBL" id="K03289">
    <property type="protein sequence ID" value="AAA33760.1"/>
    <property type="molecule type" value="Genomic_DNA"/>
</dbReference>
<dbReference type="PIR" id="B22826">
    <property type="entry name" value="B22826"/>
</dbReference>
<dbReference type="RefSeq" id="XP_007152772.1">
    <property type="nucleotide sequence ID" value="XM_007152710.1"/>
</dbReference>
<dbReference type="PDB" id="1FAT">
    <property type="method" value="X-ray"/>
    <property type="resolution" value="2.80 A"/>
    <property type="chains" value="A/B/C/D=21-272"/>
</dbReference>
<dbReference type="PDB" id="1G8W">
    <property type="method" value="X-ray"/>
    <property type="resolution" value="2.80 A"/>
    <property type="chains" value="A/B/C/D=21-253"/>
</dbReference>
<dbReference type="PDBsum" id="1FAT"/>
<dbReference type="PDBsum" id="1G8W"/>
<dbReference type="SMR" id="P05087"/>
<dbReference type="IntAct" id="P05087">
    <property type="interactions" value="1"/>
</dbReference>
<dbReference type="Allergome" id="6155">
    <property type="allergen name" value="Pha v PHA"/>
</dbReference>
<dbReference type="UniLectin" id="P05087"/>
<dbReference type="GlyConnect" id="497">
    <property type="glycosylation" value="2 N-Linked glycans (4 sites)"/>
</dbReference>
<dbReference type="GlyCosmos" id="P05087">
    <property type="glycosylation" value="3 sites, 3 glycans"/>
</dbReference>
<dbReference type="EnsemblPlants" id="ESW24766">
    <property type="protein sequence ID" value="ESW24766"/>
    <property type="gene ID" value="PHAVU_004G158300g"/>
</dbReference>
<dbReference type="Gramene" id="ESW24766">
    <property type="protein sequence ID" value="ESW24766"/>
    <property type="gene ID" value="PHAVU_004G158300g"/>
</dbReference>
<dbReference type="eggNOG" id="ENOG502QTX3">
    <property type="taxonomic scope" value="Eukaryota"/>
</dbReference>
<dbReference type="OMA" id="NGREANV"/>
<dbReference type="OrthoDB" id="1389823at2759"/>
<dbReference type="EvolutionaryTrace" id="P05087"/>
<dbReference type="PRO" id="PR:P05087"/>
<dbReference type="GO" id="GO:0005537">
    <property type="term" value="F:D-mannose binding"/>
    <property type="evidence" value="ECO:0007669"/>
    <property type="project" value="UniProtKB-KW"/>
</dbReference>
<dbReference type="GO" id="GO:0090729">
    <property type="term" value="F:toxin activity"/>
    <property type="evidence" value="ECO:0007669"/>
    <property type="project" value="UniProtKB-KW"/>
</dbReference>
<dbReference type="GO" id="GO:0006952">
    <property type="term" value="P:defense response"/>
    <property type="evidence" value="ECO:0007669"/>
    <property type="project" value="UniProtKB-KW"/>
</dbReference>
<dbReference type="CDD" id="cd06899">
    <property type="entry name" value="lectin_legume_LecRK_Arcelin_ConA"/>
    <property type="match status" value="1"/>
</dbReference>
<dbReference type="Gene3D" id="2.60.120.200">
    <property type="match status" value="1"/>
</dbReference>
<dbReference type="InterPro" id="IPR013320">
    <property type="entry name" value="ConA-like_dom_sf"/>
</dbReference>
<dbReference type="InterPro" id="IPR016363">
    <property type="entry name" value="L-lectin"/>
</dbReference>
<dbReference type="InterPro" id="IPR000985">
    <property type="entry name" value="Lectin_LegA_CS"/>
</dbReference>
<dbReference type="InterPro" id="IPR019825">
    <property type="entry name" value="Lectin_legB_Mn/Ca_BS"/>
</dbReference>
<dbReference type="InterPro" id="IPR001220">
    <property type="entry name" value="Legume_lectin_dom"/>
</dbReference>
<dbReference type="InterPro" id="IPR050258">
    <property type="entry name" value="Leguminous_Lectin"/>
</dbReference>
<dbReference type="PANTHER" id="PTHR32401">
    <property type="entry name" value="CONCANAVALIN A-LIKE LECTIN FAMILY PROTEIN"/>
    <property type="match status" value="1"/>
</dbReference>
<dbReference type="PANTHER" id="PTHR32401:SF45">
    <property type="entry name" value="LECTIN"/>
    <property type="match status" value="1"/>
</dbReference>
<dbReference type="Pfam" id="PF00139">
    <property type="entry name" value="Lectin_legB"/>
    <property type="match status" value="1"/>
</dbReference>
<dbReference type="PIRSF" id="PIRSF002690">
    <property type="entry name" value="L-type_lectin_plant"/>
    <property type="match status" value="1"/>
</dbReference>
<dbReference type="SUPFAM" id="SSF49899">
    <property type="entry name" value="Concanavalin A-like lectins/glucanases"/>
    <property type="match status" value="1"/>
</dbReference>
<dbReference type="PROSITE" id="PS00308">
    <property type="entry name" value="LECTIN_LEGUME_ALPHA"/>
    <property type="match status" value="1"/>
</dbReference>
<dbReference type="PROSITE" id="PS00307">
    <property type="entry name" value="LECTIN_LEGUME_BETA"/>
    <property type="match status" value="1"/>
</dbReference>
<reference key="1">
    <citation type="journal article" date="1985" name="EMBO J.">
        <title>Characterization of two Phaseolus vulgaris phytohemagglutinin genes closely linked on the chromosome.</title>
        <authorList>
            <person name="Hoffman L.M."/>
            <person name="Donaldson D.D."/>
        </authorList>
    </citation>
    <scope>NUCLEOTIDE SEQUENCE [GENOMIC DNA]</scope>
</reference>
<reference key="2">
    <citation type="journal article" date="1986" name="Plant Physiol.">
        <title>The high mannose oligosaccharide of phytohemagglutinin is attached to asparagine 12 and the modified oligosaccharide to asparagine 60.</title>
        <authorList>
            <person name="Sturm A."/>
            <person name="Chrispeels M.J."/>
        </authorList>
    </citation>
    <scope>GLYCOSYLATION AT ASN-32 AND ASN-80</scope>
    <source>
        <strain>cv. Greensleeves</strain>
    </source>
</reference>
<reference key="3">
    <citation type="journal article" date="1996" name="J. Biol. Chem.">
        <title>The crystallographic structure of phytohemagglutinin-L.</title>
        <authorList>
            <person name="Hamelryck T.W."/>
            <person name="Dao-Thi M.H."/>
            <person name="Poortmans F."/>
            <person name="Chrispeels M.J."/>
            <person name="Wyns L."/>
            <person name="Loris R."/>
        </authorList>
    </citation>
    <scope>X-RAY CRYSTALLOGRAPHY (2.8 ANGSTROMS)</scope>
</reference>
<gene>
    <name type="primary">DLEC2</name>
</gene>
<comment type="function">
    <text>This insecticidal carbohydrate-binding lectin is toxic for the cowpea weevil.</text>
</comment>
<comment type="subunit">
    <text>Homotetramer.</text>
</comment>
<comment type="PTM">
    <text evidence="1">N-glycosylated on Asn-80; contains xylose.</text>
</comment>
<comment type="miscellaneous">
    <text>Antibiosis properties of legume lectins are proposed to be due to the lysis of epithelial cells of the intestine by binding to the carbohydrate moieties of these proteins.</text>
</comment>
<comment type="similarity">
    <text evidence="2">Belongs to the leguminous lectin family.</text>
</comment>
<comment type="online information" name="Functional Glycomics Gateway - Glycan Binding">
    <link uri="https://www.functionalglycomics.org/glycan-array/1000717"/>
    <text>PHA-L</text>
</comment>
<accession>P05087</accession>
<feature type="signal peptide">
    <location>
        <begin position="1"/>
        <end position="20"/>
    </location>
</feature>
<feature type="chain" id="PRO_0000017634" description="Leucoagglutinating phytohemagglutinin">
    <location>
        <begin position="21"/>
        <end position="272"/>
    </location>
</feature>
<feature type="glycosylation site" id="CAR_000121" description="N-linked (GlcNAc...) (high mannose) asparagine" evidence="1">
    <location>
        <position position="32"/>
    </location>
</feature>
<feature type="glycosylation site" id="CAR_000122" description="N-linked (GlcNAc...) (complex) asparagine" evidence="1">
    <location>
        <position position="80"/>
    </location>
</feature>
<feature type="strand" evidence="3">
    <location>
        <begin position="24"/>
        <end position="30"/>
    </location>
</feature>
<feature type="helix" evidence="3">
    <location>
        <begin position="33"/>
        <end position="35"/>
    </location>
</feature>
<feature type="strand" evidence="3">
    <location>
        <begin position="36"/>
        <end position="40"/>
    </location>
</feature>
<feature type="strand" evidence="3">
    <location>
        <begin position="66"/>
        <end position="76"/>
    </location>
</feature>
<feature type="turn" evidence="3">
    <location>
        <begin position="80"/>
        <end position="83"/>
    </location>
</feature>
<feature type="strand" evidence="3">
    <location>
        <begin position="84"/>
        <end position="95"/>
    </location>
</feature>
<feature type="strand" evidence="3">
    <location>
        <begin position="106"/>
        <end position="114"/>
    </location>
</feature>
<feature type="helix" evidence="3">
    <location>
        <begin position="123"/>
        <end position="125"/>
    </location>
</feature>
<feature type="turn" evidence="3">
    <location>
        <begin position="126"/>
        <end position="128"/>
    </location>
</feature>
<feature type="strand" evidence="3">
    <location>
        <begin position="139"/>
        <end position="144"/>
    </location>
</feature>
<feature type="turn" evidence="3">
    <location>
        <begin position="149"/>
        <end position="151"/>
    </location>
</feature>
<feature type="strand" evidence="3">
    <location>
        <begin position="157"/>
        <end position="166"/>
    </location>
</feature>
<feature type="strand" evidence="3">
    <location>
        <begin position="168"/>
        <end position="172"/>
    </location>
</feature>
<feature type="strand" evidence="3">
    <location>
        <begin position="180"/>
        <end position="188"/>
    </location>
</feature>
<feature type="turn" evidence="3">
    <location>
        <begin position="189"/>
        <end position="192"/>
    </location>
</feature>
<feature type="strand" evidence="3">
    <location>
        <begin position="193"/>
        <end position="200"/>
    </location>
</feature>
<feature type="turn" evidence="3">
    <location>
        <begin position="201"/>
        <end position="204"/>
    </location>
</feature>
<feature type="strand" evidence="3">
    <location>
        <begin position="205"/>
        <end position="212"/>
    </location>
</feature>
<feature type="helix" evidence="3">
    <location>
        <begin position="215"/>
        <end position="218"/>
    </location>
</feature>
<feature type="strand" evidence="3">
    <location>
        <begin position="221"/>
        <end position="231"/>
    </location>
</feature>
<feature type="strand" evidence="3">
    <location>
        <begin position="242"/>
        <end position="252"/>
    </location>
</feature>
<sequence length="272" mass="29556">MASSKFFTVLFLVLLTHANSSNDIYFNFQRFNETNLILQRDASVSSSGQLRLTNLNGNGEPRVGSLGRAFYSAPIQIWDNTTGTVASFATSFTFNIQVPNNAGPADGLAFALVPVGSQPKDKGGFLGLFDGSNSNFHTVAVEFDTLYNKDWDPTERHIGIDVNSIRSIKTTRWDFVNGENAEVLITYDSSTNLLVASLVYPSQKTSFIVSDTVDLKSVLPEWVSVGFSATTGINKGNVETNDVLSWSFASKLSDGTTSEGLNLANLVLNKIL</sequence>
<proteinExistence type="evidence at protein level"/>
<evidence type="ECO:0000269" key="1">
    <source ref="2"/>
</evidence>
<evidence type="ECO:0000305" key="2"/>
<evidence type="ECO:0007829" key="3">
    <source>
        <dbReference type="PDB" id="1FAT"/>
    </source>
</evidence>